<protein>
    <recommendedName>
        <fullName evidence="1">Crossover junction endodeoxyribonuclease RuvC</fullName>
        <ecNumber evidence="1">3.1.21.10</ecNumber>
    </recommendedName>
    <alternativeName>
        <fullName evidence="1">Holliday junction nuclease RuvC</fullName>
    </alternativeName>
    <alternativeName>
        <fullName evidence="1">Holliday junction resolvase RuvC</fullName>
    </alternativeName>
</protein>
<feature type="chain" id="PRO_1000071036" description="Crossover junction endodeoxyribonuclease RuvC">
    <location>
        <begin position="1"/>
        <end position="172"/>
    </location>
</feature>
<feature type="active site" evidence="1">
    <location>
        <position position="11"/>
    </location>
</feature>
<feature type="active site" evidence="1">
    <location>
        <position position="70"/>
    </location>
</feature>
<feature type="active site" evidence="1">
    <location>
        <position position="142"/>
    </location>
</feature>
<feature type="binding site" evidence="1">
    <location>
        <position position="11"/>
    </location>
    <ligand>
        <name>Mg(2+)</name>
        <dbReference type="ChEBI" id="CHEBI:18420"/>
        <label>1</label>
    </ligand>
</feature>
<feature type="binding site" evidence="1">
    <location>
        <position position="70"/>
    </location>
    <ligand>
        <name>Mg(2+)</name>
        <dbReference type="ChEBI" id="CHEBI:18420"/>
        <label>2</label>
    </ligand>
</feature>
<feature type="binding site" evidence="1">
    <location>
        <position position="142"/>
    </location>
    <ligand>
        <name>Mg(2+)</name>
        <dbReference type="ChEBI" id="CHEBI:18420"/>
        <label>1</label>
    </ligand>
</feature>
<keyword id="KW-0963">Cytoplasm</keyword>
<keyword id="KW-0227">DNA damage</keyword>
<keyword id="KW-0233">DNA recombination</keyword>
<keyword id="KW-0234">DNA repair</keyword>
<keyword id="KW-0238">DNA-binding</keyword>
<keyword id="KW-0255">Endonuclease</keyword>
<keyword id="KW-0378">Hydrolase</keyword>
<keyword id="KW-0460">Magnesium</keyword>
<keyword id="KW-0479">Metal-binding</keyword>
<keyword id="KW-0540">Nuclease</keyword>
<accession>Q31H85</accession>
<sequence length="172" mass="18886">MAQLKRILGIDPGSRKTGFGIIESGRFHPNYVSSGVIRVEKLTGAQRLKTIFESVCQIIDQYQPHVMAIEKVFVYKNPSSAIKLGQARGVILCAAAIKEIPIMEYTPTQIKSTIVGQGHATKDQVQFMVQNLLKLTESPQEDAADALAGALCHDRYLTLGIDPEKISKGTKF</sequence>
<gene>
    <name evidence="1" type="primary">ruvC</name>
    <name type="ordered locus">Tcr_0892</name>
</gene>
<evidence type="ECO:0000255" key="1">
    <source>
        <dbReference type="HAMAP-Rule" id="MF_00034"/>
    </source>
</evidence>
<dbReference type="EC" id="3.1.21.10" evidence="1"/>
<dbReference type="EMBL" id="CP000109">
    <property type="protein sequence ID" value="ABB41488.1"/>
    <property type="molecule type" value="Genomic_DNA"/>
</dbReference>
<dbReference type="SMR" id="Q31H85"/>
<dbReference type="STRING" id="317025.Tcr_0892"/>
<dbReference type="KEGG" id="tcx:Tcr_0892"/>
<dbReference type="eggNOG" id="COG0817">
    <property type="taxonomic scope" value="Bacteria"/>
</dbReference>
<dbReference type="HOGENOM" id="CLU_091257_2_1_6"/>
<dbReference type="OrthoDB" id="9805499at2"/>
<dbReference type="GO" id="GO:0005737">
    <property type="term" value="C:cytoplasm"/>
    <property type="evidence" value="ECO:0007669"/>
    <property type="project" value="UniProtKB-SubCell"/>
</dbReference>
<dbReference type="GO" id="GO:0048476">
    <property type="term" value="C:Holliday junction resolvase complex"/>
    <property type="evidence" value="ECO:0007669"/>
    <property type="project" value="UniProtKB-UniRule"/>
</dbReference>
<dbReference type="GO" id="GO:0008821">
    <property type="term" value="F:crossover junction DNA endonuclease activity"/>
    <property type="evidence" value="ECO:0007669"/>
    <property type="project" value="UniProtKB-UniRule"/>
</dbReference>
<dbReference type="GO" id="GO:0003677">
    <property type="term" value="F:DNA binding"/>
    <property type="evidence" value="ECO:0007669"/>
    <property type="project" value="UniProtKB-KW"/>
</dbReference>
<dbReference type="GO" id="GO:0000287">
    <property type="term" value="F:magnesium ion binding"/>
    <property type="evidence" value="ECO:0007669"/>
    <property type="project" value="UniProtKB-UniRule"/>
</dbReference>
<dbReference type="GO" id="GO:0006310">
    <property type="term" value="P:DNA recombination"/>
    <property type="evidence" value="ECO:0007669"/>
    <property type="project" value="UniProtKB-UniRule"/>
</dbReference>
<dbReference type="GO" id="GO:0006281">
    <property type="term" value="P:DNA repair"/>
    <property type="evidence" value="ECO:0007669"/>
    <property type="project" value="UniProtKB-UniRule"/>
</dbReference>
<dbReference type="CDD" id="cd16962">
    <property type="entry name" value="RuvC"/>
    <property type="match status" value="1"/>
</dbReference>
<dbReference type="FunFam" id="3.30.420.10:FF:000002">
    <property type="entry name" value="Crossover junction endodeoxyribonuclease RuvC"/>
    <property type="match status" value="1"/>
</dbReference>
<dbReference type="Gene3D" id="3.30.420.10">
    <property type="entry name" value="Ribonuclease H-like superfamily/Ribonuclease H"/>
    <property type="match status" value="1"/>
</dbReference>
<dbReference type="HAMAP" id="MF_00034">
    <property type="entry name" value="RuvC"/>
    <property type="match status" value="1"/>
</dbReference>
<dbReference type="InterPro" id="IPR012337">
    <property type="entry name" value="RNaseH-like_sf"/>
</dbReference>
<dbReference type="InterPro" id="IPR036397">
    <property type="entry name" value="RNaseH_sf"/>
</dbReference>
<dbReference type="InterPro" id="IPR002176">
    <property type="entry name" value="X-over_junc_endoDNase_RuvC"/>
</dbReference>
<dbReference type="NCBIfam" id="NF000711">
    <property type="entry name" value="PRK00039.2-1"/>
    <property type="match status" value="1"/>
</dbReference>
<dbReference type="NCBIfam" id="TIGR00228">
    <property type="entry name" value="ruvC"/>
    <property type="match status" value="1"/>
</dbReference>
<dbReference type="PANTHER" id="PTHR30194">
    <property type="entry name" value="CROSSOVER JUNCTION ENDODEOXYRIBONUCLEASE RUVC"/>
    <property type="match status" value="1"/>
</dbReference>
<dbReference type="PANTHER" id="PTHR30194:SF3">
    <property type="entry name" value="CROSSOVER JUNCTION ENDODEOXYRIBONUCLEASE RUVC"/>
    <property type="match status" value="1"/>
</dbReference>
<dbReference type="Pfam" id="PF02075">
    <property type="entry name" value="RuvC"/>
    <property type="match status" value="1"/>
</dbReference>
<dbReference type="PRINTS" id="PR00696">
    <property type="entry name" value="RSOLVASERUVC"/>
</dbReference>
<dbReference type="SUPFAM" id="SSF53098">
    <property type="entry name" value="Ribonuclease H-like"/>
    <property type="match status" value="1"/>
</dbReference>
<name>RUVC_HYDCU</name>
<comment type="function">
    <text evidence="1">The RuvA-RuvB-RuvC complex processes Holliday junction (HJ) DNA during genetic recombination and DNA repair. Endonuclease that resolves HJ intermediates. Cleaves cruciform DNA by making single-stranded nicks across the HJ at symmetrical positions within the homologous arms, yielding a 5'-phosphate and a 3'-hydroxyl group; requires a central core of homology in the junction. The consensus cleavage sequence is 5'-(A/T)TT(C/G)-3'. Cleavage occurs on the 3'-side of the TT dinucleotide at the point of strand exchange. HJ branch migration catalyzed by RuvA-RuvB allows RuvC to scan DNA until it finds its consensus sequence, where it cleaves and resolves the cruciform DNA.</text>
</comment>
<comment type="catalytic activity">
    <reaction evidence="1">
        <text>Endonucleolytic cleavage at a junction such as a reciprocal single-stranded crossover between two homologous DNA duplexes (Holliday junction).</text>
        <dbReference type="EC" id="3.1.21.10"/>
    </reaction>
</comment>
<comment type="cofactor">
    <cofactor evidence="1">
        <name>Mg(2+)</name>
        <dbReference type="ChEBI" id="CHEBI:18420"/>
    </cofactor>
    <text evidence="1">Binds 2 Mg(2+) ion per subunit.</text>
</comment>
<comment type="subunit">
    <text evidence="1">Homodimer which binds Holliday junction (HJ) DNA. The HJ becomes 2-fold symmetrical on binding to RuvC with unstacked arms; it has a different conformation from HJ DNA in complex with RuvA. In the full resolvosome a probable DNA-RuvA(4)-RuvB(12)-RuvC(2) complex forms which resolves the HJ.</text>
</comment>
<comment type="subcellular location">
    <subcellularLocation>
        <location evidence="1">Cytoplasm</location>
    </subcellularLocation>
</comment>
<comment type="similarity">
    <text evidence="1">Belongs to the RuvC family.</text>
</comment>
<proteinExistence type="inferred from homology"/>
<reference key="1">
    <citation type="journal article" date="2006" name="PLoS Biol.">
        <title>The genome of deep-sea vent chemolithoautotroph Thiomicrospira crunogena XCL-2.</title>
        <authorList>
            <person name="Scott K.M."/>
            <person name="Sievert S.M."/>
            <person name="Abril F.N."/>
            <person name="Ball L.A."/>
            <person name="Barrett C.J."/>
            <person name="Blake R.A."/>
            <person name="Boller A.J."/>
            <person name="Chain P.S.G."/>
            <person name="Clark J.A."/>
            <person name="Davis C.R."/>
            <person name="Detter C."/>
            <person name="Do K.F."/>
            <person name="Dobrinski K.P."/>
            <person name="Faza B.I."/>
            <person name="Fitzpatrick K.A."/>
            <person name="Freyermuth S.K."/>
            <person name="Harmer T.L."/>
            <person name="Hauser L.J."/>
            <person name="Huegler M."/>
            <person name="Kerfeld C.A."/>
            <person name="Klotz M.G."/>
            <person name="Kong W.W."/>
            <person name="Land M."/>
            <person name="Lapidus A."/>
            <person name="Larimer F.W."/>
            <person name="Longo D.L."/>
            <person name="Lucas S."/>
            <person name="Malfatti S.A."/>
            <person name="Massey S.E."/>
            <person name="Martin D.D."/>
            <person name="McCuddin Z."/>
            <person name="Meyer F."/>
            <person name="Moore J.L."/>
            <person name="Ocampo L.H. Jr."/>
            <person name="Paul J.H."/>
            <person name="Paulsen I.T."/>
            <person name="Reep D.K."/>
            <person name="Ren Q."/>
            <person name="Ross R.L."/>
            <person name="Sato P.Y."/>
            <person name="Thomas P."/>
            <person name="Tinkham L.E."/>
            <person name="Zeruth G.T."/>
        </authorList>
    </citation>
    <scope>NUCLEOTIDE SEQUENCE [LARGE SCALE GENOMIC DNA]</scope>
    <source>
        <strain>DSM 25203 / XCL-2</strain>
    </source>
</reference>
<organism>
    <name type="scientific">Hydrogenovibrio crunogenus (strain DSM 25203 / XCL-2)</name>
    <name type="common">Thiomicrospira crunogena</name>
    <dbReference type="NCBI Taxonomy" id="317025"/>
    <lineage>
        <taxon>Bacteria</taxon>
        <taxon>Pseudomonadati</taxon>
        <taxon>Pseudomonadota</taxon>
        <taxon>Gammaproteobacteria</taxon>
        <taxon>Thiotrichales</taxon>
        <taxon>Piscirickettsiaceae</taxon>
        <taxon>Hydrogenovibrio</taxon>
    </lineage>
</organism>